<organism>
    <name type="scientific">Rickettsia peacockii (strain Rustic)</name>
    <dbReference type="NCBI Taxonomy" id="562019"/>
    <lineage>
        <taxon>Bacteria</taxon>
        <taxon>Pseudomonadati</taxon>
        <taxon>Pseudomonadota</taxon>
        <taxon>Alphaproteobacteria</taxon>
        <taxon>Rickettsiales</taxon>
        <taxon>Rickettsiaceae</taxon>
        <taxon>Rickettsieae</taxon>
        <taxon>Rickettsia</taxon>
        <taxon>spotted fever group</taxon>
    </lineage>
</organism>
<gene>
    <name type="ordered locus">RPR_06875</name>
</gene>
<keyword id="KW-0997">Cell inner membrane</keyword>
<keyword id="KW-1003">Cell membrane</keyword>
<keyword id="KW-0472">Membrane</keyword>
<protein>
    <recommendedName>
        <fullName evidence="1">Putative membrane protein insertion efficiency factor</fullName>
    </recommendedName>
</protein>
<comment type="function">
    <text evidence="1">Could be involved in insertion of integral membrane proteins into the membrane.</text>
</comment>
<comment type="subcellular location">
    <subcellularLocation>
        <location evidence="1">Cell inner membrane</location>
        <topology evidence="1">Peripheral membrane protein</topology>
        <orientation evidence="1">Cytoplasmic side</orientation>
    </subcellularLocation>
</comment>
<comment type="similarity">
    <text evidence="1">Belongs to the UPF0161 family.</text>
</comment>
<reference key="1">
    <citation type="journal article" date="2009" name="PLoS ONE">
        <title>Genome sequence of the endosymbiont Rickettsia peacockii and comparison with virulent Rickettsia rickettsii: identification of virulence factors.</title>
        <authorList>
            <person name="Felsheim R.F."/>
            <person name="Kurtti T.J."/>
            <person name="Munderloh U.G."/>
        </authorList>
    </citation>
    <scope>NUCLEOTIDE SEQUENCE [LARGE SCALE GENOMIC DNA]</scope>
    <source>
        <strain>Rustic</strain>
    </source>
</reference>
<proteinExistence type="inferred from homology"/>
<evidence type="ECO:0000255" key="1">
    <source>
        <dbReference type="HAMAP-Rule" id="MF_00386"/>
    </source>
</evidence>
<feature type="chain" id="PRO_1000205790" description="Putative membrane protein insertion efficiency factor">
    <location>
        <begin position="1"/>
        <end position="82"/>
    </location>
</feature>
<sequence length="82" mass="9532">MTRILLLLLRFYQYFISPLLGNNCRFHLTCSEYAKEAISMHGSIKGLWFTFKRIIKCQPFCDGGYDTVPISIKNSKPLNKKI</sequence>
<name>YIDD_RICPU</name>
<accession>C4K2P7</accession>
<dbReference type="EMBL" id="CP001227">
    <property type="protein sequence ID" value="ACR47843.1"/>
    <property type="molecule type" value="Genomic_DNA"/>
</dbReference>
<dbReference type="RefSeq" id="WP_012737006.1">
    <property type="nucleotide sequence ID" value="NC_012730.1"/>
</dbReference>
<dbReference type="KEGG" id="rpk:RPR_06875"/>
<dbReference type="HOGENOM" id="CLU_144811_5_2_5"/>
<dbReference type="Proteomes" id="UP000005015">
    <property type="component" value="Chromosome"/>
</dbReference>
<dbReference type="GO" id="GO:0005886">
    <property type="term" value="C:plasma membrane"/>
    <property type="evidence" value="ECO:0007669"/>
    <property type="project" value="UniProtKB-SubCell"/>
</dbReference>
<dbReference type="HAMAP" id="MF_00386">
    <property type="entry name" value="UPF0161_YidD"/>
    <property type="match status" value="1"/>
</dbReference>
<dbReference type="InterPro" id="IPR002696">
    <property type="entry name" value="Membr_insert_effic_factor_YidD"/>
</dbReference>
<dbReference type="NCBIfam" id="TIGR00278">
    <property type="entry name" value="membrane protein insertion efficiency factor YidD"/>
    <property type="match status" value="1"/>
</dbReference>
<dbReference type="PANTHER" id="PTHR33383">
    <property type="entry name" value="MEMBRANE PROTEIN INSERTION EFFICIENCY FACTOR-RELATED"/>
    <property type="match status" value="1"/>
</dbReference>
<dbReference type="PANTHER" id="PTHR33383:SF1">
    <property type="entry name" value="MEMBRANE PROTEIN INSERTION EFFICIENCY FACTOR-RELATED"/>
    <property type="match status" value="1"/>
</dbReference>
<dbReference type="Pfam" id="PF01809">
    <property type="entry name" value="YidD"/>
    <property type="match status" value="1"/>
</dbReference>
<dbReference type="SMART" id="SM01234">
    <property type="entry name" value="Haemolytic"/>
    <property type="match status" value="1"/>
</dbReference>